<organism>
    <name type="scientific">Stenotrophomonas maltophilia (strain R551-3)</name>
    <dbReference type="NCBI Taxonomy" id="391008"/>
    <lineage>
        <taxon>Bacteria</taxon>
        <taxon>Pseudomonadati</taxon>
        <taxon>Pseudomonadota</taxon>
        <taxon>Gammaproteobacteria</taxon>
        <taxon>Lysobacterales</taxon>
        <taxon>Lysobacteraceae</taxon>
        <taxon>Stenotrophomonas</taxon>
        <taxon>Stenotrophomonas maltophilia group</taxon>
    </lineage>
</organism>
<sequence>MTDNAPRIHPTAVIDPAARLADDVQVGAFTLIGADVEIGAGTVVGPHCSIHGPTRIGRDNRFVGHAAIGGEPQDKKFAGERTELVIGDRNVFREFVTVNRGTGGGGGITTIGNDNWMLAYTHVAHDCHVGNFCVFSNNTTLAGHVTVGDYVIISGFAGAHQFCRIGAHAFLGMGALTNGDVPPFTMVGTDSLGRPRGINSEGLKRRGFDAERISAIKRAYRTLYVAGLPLAEAKQQLTEQARGSDDVKAMLDFIEHAERPLLR</sequence>
<evidence type="ECO:0000255" key="1">
    <source>
        <dbReference type="HAMAP-Rule" id="MF_00387"/>
    </source>
</evidence>
<feature type="chain" id="PRO_1000122735" description="Acyl-[acyl-carrier-protein]--UDP-N-acetylglucosamine O-acyltransferase">
    <location>
        <begin position="1"/>
        <end position="263"/>
    </location>
</feature>
<proteinExistence type="inferred from homology"/>
<dbReference type="EC" id="2.3.1.129" evidence="1"/>
<dbReference type="EMBL" id="CP001111">
    <property type="protein sequence ID" value="ACF50959.1"/>
    <property type="molecule type" value="Genomic_DNA"/>
</dbReference>
<dbReference type="RefSeq" id="WP_012510508.1">
    <property type="nucleotide sequence ID" value="NC_011071.1"/>
</dbReference>
<dbReference type="SMR" id="B4SQ11"/>
<dbReference type="STRING" id="391008.Smal_1254"/>
<dbReference type="KEGG" id="smt:Smal_1254"/>
<dbReference type="eggNOG" id="COG1043">
    <property type="taxonomic scope" value="Bacteria"/>
</dbReference>
<dbReference type="HOGENOM" id="CLU_061249_0_0_6"/>
<dbReference type="OrthoDB" id="9807278at2"/>
<dbReference type="UniPathway" id="UPA00359">
    <property type="reaction ID" value="UER00477"/>
</dbReference>
<dbReference type="Proteomes" id="UP000001867">
    <property type="component" value="Chromosome"/>
</dbReference>
<dbReference type="GO" id="GO:0005737">
    <property type="term" value="C:cytoplasm"/>
    <property type="evidence" value="ECO:0007669"/>
    <property type="project" value="UniProtKB-SubCell"/>
</dbReference>
<dbReference type="GO" id="GO:0016020">
    <property type="term" value="C:membrane"/>
    <property type="evidence" value="ECO:0007669"/>
    <property type="project" value="GOC"/>
</dbReference>
<dbReference type="GO" id="GO:0008780">
    <property type="term" value="F:acyl-[acyl-carrier-protein]-UDP-N-acetylglucosamine O-acyltransferase activity"/>
    <property type="evidence" value="ECO:0007669"/>
    <property type="project" value="UniProtKB-UniRule"/>
</dbReference>
<dbReference type="GO" id="GO:0009245">
    <property type="term" value="P:lipid A biosynthetic process"/>
    <property type="evidence" value="ECO:0007669"/>
    <property type="project" value="UniProtKB-UniRule"/>
</dbReference>
<dbReference type="CDD" id="cd03351">
    <property type="entry name" value="LbH_UDP-GlcNAc_AT"/>
    <property type="match status" value="1"/>
</dbReference>
<dbReference type="Gene3D" id="2.160.10.10">
    <property type="entry name" value="Hexapeptide repeat proteins"/>
    <property type="match status" value="1"/>
</dbReference>
<dbReference type="Gene3D" id="1.20.1180.10">
    <property type="entry name" value="Udp N-acetylglucosamine O-acyltransferase, C-terminal domain"/>
    <property type="match status" value="1"/>
</dbReference>
<dbReference type="HAMAP" id="MF_00387">
    <property type="entry name" value="LpxA"/>
    <property type="match status" value="1"/>
</dbReference>
<dbReference type="InterPro" id="IPR029098">
    <property type="entry name" value="Acetyltransf_C"/>
</dbReference>
<dbReference type="InterPro" id="IPR037157">
    <property type="entry name" value="Acetyltransf_C_sf"/>
</dbReference>
<dbReference type="InterPro" id="IPR001451">
    <property type="entry name" value="Hexapep"/>
</dbReference>
<dbReference type="InterPro" id="IPR010137">
    <property type="entry name" value="Lipid_A_LpxA"/>
</dbReference>
<dbReference type="InterPro" id="IPR011004">
    <property type="entry name" value="Trimer_LpxA-like_sf"/>
</dbReference>
<dbReference type="NCBIfam" id="TIGR01852">
    <property type="entry name" value="lipid_A_lpxA"/>
    <property type="match status" value="1"/>
</dbReference>
<dbReference type="NCBIfam" id="NF003657">
    <property type="entry name" value="PRK05289.1"/>
    <property type="match status" value="1"/>
</dbReference>
<dbReference type="PANTHER" id="PTHR43480">
    <property type="entry name" value="ACYL-[ACYL-CARRIER-PROTEIN]--UDP-N-ACETYLGLUCOSAMINE O-ACYLTRANSFERASE"/>
    <property type="match status" value="1"/>
</dbReference>
<dbReference type="PANTHER" id="PTHR43480:SF1">
    <property type="entry name" value="ACYL-[ACYL-CARRIER-PROTEIN]--UDP-N-ACETYLGLUCOSAMINE O-ACYLTRANSFERASE, MITOCHONDRIAL-RELATED"/>
    <property type="match status" value="1"/>
</dbReference>
<dbReference type="Pfam" id="PF13720">
    <property type="entry name" value="Acetyltransf_11"/>
    <property type="match status" value="1"/>
</dbReference>
<dbReference type="Pfam" id="PF00132">
    <property type="entry name" value="Hexapep"/>
    <property type="match status" value="1"/>
</dbReference>
<dbReference type="PIRSF" id="PIRSF000456">
    <property type="entry name" value="UDP-GlcNAc_acltr"/>
    <property type="match status" value="1"/>
</dbReference>
<dbReference type="SUPFAM" id="SSF51161">
    <property type="entry name" value="Trimeric LpxA-like enzymes"/>
    <property type="match status" value="1"/>
</dbReference>
<protein>
    <recommendedName>
        <fullName evidence="1">Acyl-[acyl-carrier-protein]--UDP-N-acetylglucosamine O-acyltransferase</fullName>
        <shortName evidence="1">UDP-N-acetylglucosamine acyltransferase</shortName>
        <ecNumber evidence="1">2.3.1.129</ecNumber>
    </recommendedName>
</protein>
<reference key="1">
    <citation type="submission" date="2008-06" db="EMBL/GenBank/DDBJ databases">
        <title>Complete sequence of Stenotrophomonas maltophilia R551-3.</title>
        <authorList>
            <consortium name="US DOE Joint Genome Institute"/>
            <person name="Lucas S."/>
            <person name="Copeland A."/>
            <person name="Lapidus A."/>
            <person name="Glavina del Rio T."/>
            <person name="Dalin E."/>
            <person name="Tice H."/>
            <person name="Pitluck S."/>
            <person name="Chain P."/>
            <person name="Malfatti S."/>
            <person name="Shin M."/>
            <person name="Vergez L."/>
            <person name="Lang D."/>
            <person name="Schmutz J."/>
            <person name="Larimer F."/>
            <person name="Land M."/>
            <person name="Hauser L."/>
            <person name="Kyrpides N."/>
            <person name="Mikhailova N."/>
            <person name="Taghavi S."/>
            <person name="Monchy S."/>
            <person name="Newman L."/>
            <person name="Vangronsveld J."/>
            <person name="van der Lelie D."/>
            <person name="Richardson P."/>
        </authorList>
    </citation>
    <scope>NUCLEOTIDE SEQUENCE [LARGE SCALE GENOMIC DNA]</scope>
    <source>
        <strain>R551-3</strain>
    </source>
</reference>
<name>LPXA_STRM5</name>
<comment type="function">
    <text evidence="1">Involved in the biosynthesis of lipid A, a phosphorylated glycolipid that anchors the lipopolysaccharide to the outer membrane of the cell.</text>
</comment>
<comment type="catalytic activity">
    <reaction evidence="1">
        <text>a (3R)-hydroxyacyl-[ACP] + UDP-N-acetyl-alpha-D-glucosamine = a UDP-3-O-[(3R)-3-hydroxyacyl]-N-acetyl-alpha-D-glucosamine + holo-[ACP]</text>
        <dbReference type="Rhea" id="RHEA:67812"/>
        <dbReference type="Rhea" id="RHEA-COMP:9685"/>
        <dbReference type="Rhea" id="RHEA-COMP:9945"/>
        <dbReference type="ChEBI" id="CHEBI:57705"/>
        <dbReference type="ChEBI" id="CHEBI:64479"/>
        <dbReference type="ChEBI" id="CHEBI:78827"/>
        <dbReference type="ChEBI" id="CHEBI:173225"/>
        <dbReference type="EC" id="2.3.1.129"/>
    </reaction>
</comment>
<comment type="pathway">
    <text evidence="1">Glycolipid biosynthesis; lipid IV(A) biosynthesis; lipid IV(A) from (3R)-3-hydroxytetradecanoyl-[acyl-carrier-protein] and UDP-N-acetyl-alpha-D-glucosamine: step 1/6.</text>
</comment>
<comment type="subunit">
    <text evidence="1">Homotrimer.</text>
</comment>
<comment type="subcellular location">
    <subcellularLocation>
        <location evidence="1">Cytoplasm</location>
    </subcellularLocation>
</comment>
<comment type="similarity">
    <text evidence="1">Belongs to the transferase hexapeptide repeat family. LpxA subfamily.</text>
</comment>
<keyword id="KW-0012">Acyltransferase</keyword>
<keyword id="KW-0963">Cytoplasm</keyword>
<keyword id="KW-0441">Lipid A biosynthesis</keyword>
<keyword id="KW-0444">Lipid biosynthesis</keyword>
<keyword id="KW-0443">Lipid metabolism</keyword>
<keyword id="KW-0677">Repeat</keyword>
<keyword id="KW-0808">Transferase</keyword>
<gene>
    <name evidence="1" type="primary">lpxA</name>
    <name type="ordered locus">Smal_1254</name>
</gene>
<accession>B4SQ11</accession>